<organismHost>
    <name type="scientific">Acrocephalus scirpaceus</name>
    <name type="common">Eurasian reed-warbler</name>
    <dbReference type="NCBI Taxonomy" id="48156"/>
</organismHost>
<organismHost>
    <name type="scientific">Aedes</name>
    <dbReference type="NCBI Taxonomy" id="7158"/>
</organismHost>
<organismHost>
    <name type="scientific">Culex</name>
    <dbReference type="NCBI Taxonomy" id="53527"/>
</organismHost>
<organismHost>
    <name type="scientific">Homo sapiens</name>
    <name type="common">Human</name>
    <dbReference type="NCBI Taxonomy" id="9606"/>
</organismHost>
<organismHost>
    <name type="scientific">Motacilla alba</name>
    <name type="common">White wagtail</name>
    <name type="synonym">Pied wagtail</name>
    <dbReference type="NCBI Taxonomy" id="45807"/>
</organismHost>
<organismHost>
    <name type="scientific">Streptopelia turtur</name>
    <dbReference type="NCBI Taxonomy" id="177155"/>
</organismHost>
<comment type="function">
    <molecule>Capsid protein</molecule>
    <text evidence="2 3 6">Forms an icosahedral capsid with a T=4 symmetry composed of 240 copies of the capsid protein surrounded by a lipid membrane through which penetrate 80 spikes composed of trimers of E1-E2 heterodimers (By similarity). The capsid protein binds to the viral RNA genome at a site adjacent to a ribosome binding site for viral genome translation following genome release (By similarity). Possesses a protease activity that results in its autocatalytic cleavage from the nascent structural protein (By similarity). Following its self-cleavage, the capsid protein transiently associates with ribosomes, and within several minutes the protein binds to viral RNA and rapidly assembles into icosahedric core particles (By similarity). The resulting nucleocapsid eventually associates with the cytoplasmic domain of the spike glycoprotein E2 at the cell membrane, leading to budding and formation of mature virions (By similarity). In case of infection, new virions attach to target cells and after clathrin-mediated endocytosis their membrane fuses with the host endosomal membrane (By similarity). This leads to the release of the nucleocapsid into the cytoplasm, followed by an uncoating event necessary for the genomic RNA to become accessible (By similarity). The uncoating might be triggered by the interaction of capsid proteins with ribosomes (By similarity). Binding of ribosomes would release the genomic RNA since the same region is genomic RNA-binding and ribosome-binding (By similarity). Specifically inhibits interleukin-1 receptor-associated kinase 1/IRAK1-dependent signaling during viral entry, representing a means by which the alphaviruses may evade innate immune detection and activation prior to viral gene expression (By similarity).</text>
</comment>
<comment type="function">
    <molecule>Assembly protein E3</molecule>
    <text evidence="2">Provides the signal sequence for the translocation of the precursor of protein E3/E2 to the host endoplasmic reticulum. Furin-cleaved E3 remains associated with spike glycoprotein E1 and mediates pH protection of the latter during the transport via the secretory pathway. After virion release from the host cell, the assembly protein E3 is gradually released in the extracellular space.</text>
</comment>
<comment type="function">
    <molecule>Spike glycoprotein E2</molecule>
    <text evidence="3">Plays a role in viral attachment to target host cell, by binding to the cell receptors VLDLR or LRP8/APOER2. Synthesized as a pE2 precursor which is processed by furin at the cell membrane just before virion budding, giving rise to E2-E1 heterodimer. The pE2-E1 heterodimer is stable, whereas E2-E1 is unstable and dissociate at low pH. pE2 is processed at the last step, presumably to avoid E1 fusion activation before its final export to cell surface. E2 C-terminus contains a transitory transmembrane that would be disrupted by palmitoylation, resulting in reorientation of the C-terminal tail from lumenal to cytoplasmic side. This step is critical since E2 C-terminus is involved in budding by interacting with capsid proteins. This release of E2 C-terminus in cytoplasm occurs lately in protein export, and precludes premature assembly of particles at the endoplasmic reticulum membrane.</text>
</comment>
<comment type="function">
    <molecule>6K protein</molecule>
    <text evidence="2 3">Acts as a viroporin that participates in virus glycoprotein processing and transport to the plasma membrane, cell permeabilization and budding of viral particles (By similarity). Disrupts the calcium homeostasis of the cell, probably at the endoplasmic reticulum level resulting in the increased levels of cytoplasmic calcium (By similarity). Because of its lipophilic properties, the 6K protein is postulated to influence the selection of lipids that interact with the transmembrane domains of the glycoproteins, which, in turn, affects the deformability of the bilayer required for the extreme curvature that occurs as budding proceeds. Present in low amount in virions, about 3% compared to viral glycoproteins (By similarity).</text>
</comment>
<comment type="function">
    <molecule>Spike glycoprotein E1</molecule>
    <text evidence="3">Class II viral fusion protein. Fusion activity is inactive as long as E1 is bound to E2 in mature virion. After virus attachment to target cell via host VLDLR or LRP8/APOER2 and endocytosis, acidification of the endosome induces dissociation of E1/E2 heterodimer and concomitant trimerization of the E1 subunits. This E1 trimer is fusion active, and promotes release of viral nucleocapsid in cytoplasm after endosome and viral membrane fusion. Efficient fusion requires the presence of cholesterol and sphingolipid in the target membrane.</text>
</comment>
<comment type="catalytic activity">
    <reaction evidence="2">
        <text>Autocatalytic release of the core protein from the N-terminus of the togavirus structural polyprotein by hydrolysis of a -Trp-|-Ser- bond.</text>
        <dbReference type="EC" id="3.4.21.90"/>
    </reaction>
</comment>
<comment type="subunit">
    <molecule>Capsid protein</molecule>
    <text evidence="3 8 9">Homodimer (By similarity). Homomultimer (By similarity). Interacts with host karyopherin KPNA4; this interaction allows the nuclear import of the viral capsid protein (By similarity). Interacts with spike glycoprotein E2 (By similarity). Interacts with host IRAK1; the interaction leads to inhibition of IRAK1-dependent signaling (By similarity).</text>
</comment>
<comment type="subunit">
    <molecule>Precursor of protein E3/E2</molecule>
    <text evidence="2 3 5 9">The precursor of protein E3/E2 and E1 form a heterodimer shortly after synthesis (By similarity).</text>
</comment>
<comment type="subunit">
    <molecule>Spike glycoprotein E1</molecule>
    <text evidence="3 9">The precursor of protein E3/E2 and E1 form a heterodimer shortly after synthesis (By similarity). Processing of the precursor of protein E3/E2 into E2 and E3 results in a heterodimer of the spike glycoproteins E2 and E1 (By similarity). Spike at virion surface are constituted of a trimer of E2-E1 heterodimers (By similarity). After target cell attachment and endocytosis, E1 change conformation to form homotrimers (By similarity). E2-E1 heterodimers interact with host VLDLR or LRP8/APOER2 to mediate viral entry (By similarity). Interacts with 6K protein (By similarity).</text>
</comment>
<comment type="subunit">
    <molecule>Spike glycoprotein E2</molecule>
    <text evidence="3">Processing of the precursor of protein E3/E2 into E2 and E3 results in a heterodimer of the spike glycoproteins E2 and E1 (By similarity). Spike at virion surface are constituted of a trimer of E2-E1 heterodimers (By similarity). E2-E1 heterodimers interact with host VLDLR or LRP8/APOER2 to mediate viral entry (By similarity). Interacts with 6K protein (By similarity). Interacts with the capsid protein (By similarity).</text>
</comment>
<comment type="subunit">
    <molecule>6K protein</molecule>
    <text evidence="3 7">Oligomer (By similarity). Interacts with spike glycoprotein E1. Interacts with spike glycoprotein E2 (By similarity).</text>
</comment>
<comment type="subcellular location">
    <molecule>Capsid protein</molecule>
    <subcellularLocation>
        <location evidence="3">Virion</location>
    </subcellularLocation>
    <subcellularLocation>
        <location evidence="9">Host cytoplasm</location>
    </subcellularLocation>
    <subcellularLocation>
        <location evidence="3">Host cell membrane</location>
    </subcellularLocation>
    <subcellularLocation>
        <location evidence="9">Host nucleus</location>
    </subcellularLocation>
    <text evidence="9">Shuttles between the cytoplasm and the nucleus.</text>
</comment>
<comment type="subcellular location">
    <molecule>Spike glycoprotein E2</molecule>
    <subcellularLocation>
        <location evidence="9">Virion membrane</location>
        <topology evidence="10">Single-pass type I membrane protein</topology>
    </subcellularLocation>
    <subcellularLocation>
        <location evidence="3">Host cell membrane</location>
        <topology evidence="9">Single-pass type I membrane protein</topology>
    </subcellularLocation>
</comment>
<comment type="subcellular location">
    <molecule>6K protein</molecule>
    <subcellularLocation>
        <location evidence="3">Host cell membrane</location>
        <topology evidence="10">Multi-pass membrane protein</topology>
    </subcellularLocation>
    <subcellularLocation>
        <location evidence="3">Virion membrane</location>
        <topology evidence="10">Multi-pass membrane protein</topology>
    </subcellularLocation>
    <subcellularLocation>
        <location evidence="3">Host Golgi apparatus</location>
    </subcellularLocation>
    <subcellularLocation>
        <location>Host Golgi apparatus</location>
        <location>Host trans-Golgi network</location>
    </subcellularLocation>
    <subcellularLocation>
        <location evidence="3">Host endoplasmic reticulum</location>
    </subcellularLocation>
</comment>
<comment type="subcellular location">
    <molecule>Spike glycoprotein E1</molecule>
    <subcellularLocation>
        <location evidence="9">Virion membrane</location>
        <topology evidence="10">Single-pass type I membrane protein</topology>
    </subcellularLocation>
    <subcellularLocation>
        <location evidence="3 9">Host cell membrane</location>
        <topology evidence="10">Single-pass type I membrane protein</topology>
    </subcellularLocation>
</comment>
<comment type="domain">
    <molecule>Capsid protein</molecule>
    <text evidence="3 4">The very N-terminus also plays a role in the particle assembly process (By similarity). The N-terminus also contains a nuclear localization signal and a supra nuclear export signal (supraNES), which is an unusually strong NES that mediates host CRM1 binding in the absence of RanGTP and thus can bind CRM1, not only in the nucleus, but also in the cytoplasm (By similarity). The C-terminus functions as a protease during translation to cleave itself from the translating structural polyprotein (By similarity).</text>
</comment>
<comment type="domain">
    <text evidence="2">Structural polyprotein: As soon as the capsid protein has been autocleaved, an internal uncleaved signal peptide directs the remaining polyprotein to the endoplasmic reticulum.</text>
</comment>
<comment type="PTM">
    <text evidence="2">Structural polyprotein: Specific enzymatic cleavages in vivo yield mature proteins. Capsid protein is auto-cleaved during polyprotein translation, unmasking a signal peptide at the N-terminus of the precursor of E3/E2 (By similarity). The remaining polyprotein is then targeted to the host endoplasmic reticulum, where host signal peptidase cleaves it into pE2, 6K and E1 proteins. pE2 is further processed to mature E3 and E2 by host furin in trans-Golgi vesicle (By similarity).</text>
</comment>
<comment type="PTM">
    <molecule>Spike glycoprotein E2</molecule>
    <text evidence="2">Palmitoylated via thioester bonds. These palmitoylations may induce disruption of the C-terminus transmembrane. This would result in the reorientation of E2 C-terminus from lumenal to cytoplasmic side.</text>
</comment>
<comment type="PTM">
    <molecule>Spike glycoprotein E1</molecule>
    <text evidence="2">N-glycosylated.</text>
</comment>
<comment type="PTM">
    <molecule>Spike glycoprotein E2</molecule>
    <text evidence="2">N-glycosylated.</text>
</comment>
<comment type="PTM">
    <molecule>Assembly protein E3</molecule>
    <text evidence="2">N-glycosylated.</text>
</comment>
<comment type="PTM">
    <molecule>6K protein</molecule>
    <text evidence="2">Palmitoylated via thioester bonds.</text>
</comment>
<comment type="miscellaneous">
    <text evidence="8">Structural polyprotein: Translated from a subgenomic RNA synthesized during togavirus replication.</text>
</comment>
<sequence length="1245" mass="136650">MNRGFFNMLGRRPFPAPTAMWRPRRRRQAAPMPARNGLASQIQQLTTAVSALVIGQATRPQNPRPRPPPRQKKQAPKQPPKPKKPKPQEKKKKQPAKTKPGKRQRMALKLEADRLFDVKNEDGDVIGHALAMEGKVMKPLHVKGTIDHPVLSKLKFTKSSAYDMEFAQLPVNMRSEAFTYTSEHPEGFYNWHHGAVQYSGGRFTIPRGVGGRGDSGRPIMDNSGRVVAIVLGGADEGTRTALSVVTWNSKGKTIKTTPEGTEEWSAAPLVTAMCLLGNVSFPCNRPPTCYTREPSRALDILEENVNHEAYDTLLNAILRCGSSGRSKRSVTDDFTLTSPYLGTCSYCHHTEPCFSPIKIEQVWDEADDNTIRIQTSAQFGYDKSGAASTNKYRYMSFEQDHTVKEGTMDDIKISTSGPCRRLSYKGYFLLAKCPPGDSVTVSIASSNSATSCTMARKIKPKFVGREKYDLPPVHGKKIPCTVYDRLKETTAGYITMHRPGPHAYTSYLEESSGKVYAKPPSGKNITYECKCGDYKTGTVTTRTEITGCTAIKQCVAYKSDQTKWVFNSPDLIRHADHTAQGKLHLPFKLIPSTCMVPVAHAPNVIHGFKHISLQLDTDHLTLLTTRRLGANPEPTTEWIIGKTVRNFTVDRDGLEYIWGNHEPVRVYAQESAPGDPHGWPHEIVQHYYHRHPVYTILAVASAAVAMMIGVTVAALCACKARRECLTPYALAPNAVIPTSLALLCCVRSANAETFTETMSYFWSNSQPFFWVQLCIPLAAVIVLMRCCSCCLPFLVVAGAYLAKVDAYEHATTVPNVPQIPYKALVERAGYAPLNLEITVMSSEVLPSTNQEYITCKFTTVVPSPKVKCCGSLECQPAAHADYTCKVFGGVYPFMWGGAQCFCDSENSQMSEAYVELSADCATDHAQAIKVHTAAMKVGLRIVYGNTTSFLDVYVNGVTPGTSKDLKVIAGPISASFTPFDHKVVIHRGLVYNYDFPEYGAMKPGVFGDIQATSLTSKDLIASTDIRLLKPSAKNVHVPYTQAASGFEMWKNNSGRPLQETAPFGCKIAVNPLRAVDCSYGNIPISIDIPNAAFIRTSDAPLVSTVKCDVSECTYSADFGGMATLQYVSDREGQCPVHSHSSTATLQESTVHVLEKGAVTVHFSTASPQANFIVSLCGKKTTCNAECKPPADHIVSTPHKNDQEFQAAISKTSWSWLFALFGGASSLLIIGLTIFACSMMLTSTRR</sequence>
<accession>P27285</accession>
<accession>Q00349</accession>
<evidence type="ECO:0000250" key="1"/>
<evidence type="ECO:0000250" key="2">
    <source>
        <dbReference type="UniProtKB" id="P03315"/>
    </source>
</evidence>
<evidence type="ECO:0000250" key="3">
    <source>
        <dbReference type="UniProtKB" id="P03316"/>
    </source>
</evidence>
<evidence type="ECO:0000250" key="4">
    <source>
        <dbReference type="UniProtKB" id="P09592"/>
    </source>
</evidence>
<evidence type="ECO:0000250" key="5">
    <source>
        <dbReference type="UniProtKB" id="P0DOK1"/>
    </source>
</evidence>
<evidence type="ECO:0000250" key="6">
    <source>
        <dbReference type="UniProtKB" id="P27284"/>
    </source>
</evidence>
<evidence type="ECO:0000250" key="7">
    <source>
        <dbReference type="UniProtKB" id="Q5XXP3"/>
    </source>
</evidence>
<evidence type="ECO:0000250" key="8">
    <source>
        <dbReference type="UniProtKB" id="Q86925"/>
    </source>
</evidence>
<evidence type="ECO:0000250" key="9">
    <source>
        <dbReference type="UniProtKB" id="Q8JUX5"/>
    </source>
</evidence>
<evidence type="ECO:0000255" key="10"/>
<evidence type="ECO:0000255" key="11">
    <source>
        <dbReference type="PROSITE-ProRule" id="PRU01027"/>
    </source>
</evidence>
<evidence type="ECO:0000256" key="12">
    <source>
        <dbReference type="SAM" id="MobiDB-lite"/>
    </source>
</evidence>
<evidence type="ECO:0007829" key="13">
    <source>
        <dbReference type="PDB" id="1WYK"/>
    </source>
</evidence>
<reference key="1">
    <citation type="journal article" date="1991" name="Virology">
        <title>Structure of the Ockelbo virus genome and its relationship to other Sindbis viruses.</title>
        <authorList>
            <person name="Shirako Y."/>
            <person name="Niklasson B."/>
            <person name="Dalrymple J.M."/>
            <person name="Strauss E.G."/>
            <person name="Strauss J.H."/>
        </authorList>
    </citation>
    <scope>NUCLEOTIDE SEQUENCE [GENOMIC RNA]</scope>
</reference>
<organism>
    <name type="scientific">Sindbis virus subtype Ockelbo (strain Edsbyn 82-5)</name>
    <name type="common">OCKV</name>
    <name type="synonym">Ockelbo virus</name>
    <dbReference type="NCBI Taxonomy" id="31699"/>
    <lineage>
        <taxon>Viruses</taxon>
        <taxon>Riboviria</taxon>
        <taxon>Orthornavirae</taxon>
        <taxon>Kitrinoviricota</taxon>
        <taxon>Alsuviricetes</taxon>
        <taxon>Martellivirales</taxon>
        <taxon>Togaviridae</taxon>
        <taxon>Alphavirus</taxon>
        <taxon>Sindbis virus</taxon>
    </lineage>
</organism>
<protein>
    <recommendedName>
        <fullName>Structural polyprotein</fullName>
    </recommendedName>
    <alternativeName>
        <fullName>p130</fullName>
    </alternativeName>
    <component>
        <recommendedName>
            <fullName>Capsid protein</fullName>
            <ecNumber evidence="2">3.4.21.90</ecNumber>
        </recommendedName>
        <alternativeName>
            <fullName>Coat protein</fullName>
            <shortName>C</shortName>
        </alternativeName>
    </component>
    <component>
        <recommendedName>
            <fullName>Precursor of protein E3/E2</fullName>
        </recommendedName>
        <alternativeName>
            <fullName>p62</fullName>
        </alternativeName>
        <alternativeName>
            <fullName>pE2</fullName>
        </alternativeName>
    </component>
    <component>
        <recommendedName>
            <fullName>Assembly protein E3</fullName>
        </recommendedName>
    </component>
    <component>
        <recommendedName>
            <fullName>Spike glycoprotein E2</fullName>
        </recommendedName>
        <alternativeName>
            <fullName>E2 envelope glycoprotein</fullName>
        </alternativeName>
    </component>
    <component>
        <recommendedName>
            <fullName>6K protein</fullName>
        </recommendedName>
    </component>
    <component>
        <recommendedName>
            <fullName>Spike glycoprotein E1</fullName>
        </recommendedName>
        <alternativeName>
            <fullName>E1 envelope glycoprotein</fullName>
        </alternativeName>
    </component>
</protein>
<feature type="chain" id="PRO_0000041316" description="Capsid protein">
    <location>
        <begin position="1"/>
        <end position="264"/>
    </location>
</feature>
<feature type="chain" id="PRO_0000226240" description="Precursor of protein E3/E2" evidence="1">
    <location>
        <begin position="265"/>
        <end position="751"/>
    </location>
</feature>
<feature type="chain" id="PRO_0000041317" description="Assembly protein E3">
    <location>
        <begin position="265"/>
        <end position="328"/>
    </location>
</feature>
<feature type="chain" id="PRO_0000041318" description="Spike glycoprotein E2">
    <location>
        <begin position="329"/>
        <end position="751"/>
    </location>
</feature>
<feature type="chain" id="PRO_0000041319" description="6K protein">
    <location>
        <begin position="752"/>
        <end position="806"/>
    </location>
</feature>
<feature type="chain" id="PRO_0000041320" description="Spike glycoprotein E1">
    <location>
        <begin position="807"/>
        <end position="1245"/>
    </location>
</feature>
<feature type="topological domain" description="Extracellular" evidence="10">
    <location>
        <begin position="329"/>
        <end position="690"/>
    </location>
</feature>
<feature type="transmembrane region" description="Helical" evidence="3">
    <location>
        <begin position="691"/>
        <end position="718"/>
    </location>
</feature>
<feature type="topological domain" description="Cytoplasmic" evidence="10">
    <location>
        <begin position="719"/>
        <end position="751"/>
    </location>
</feature>
<feature type="topological domain" description="Extracellular" evidence="10">
    <location>
        <begin position="752"/>
        <end position="763"/>
    </location>
</feature>
<feature type="transmembrane region" description="Helical" evidence="10">
    <location>
        <begin position="764"/>
        <end position="784"/>
    </location>
</feature>
<feature type="topological domain" description="Cytoplasmic" evidence="10">
    <location>
        <position position="785"/>
    </location>
</feature>
<feature type="transmembrane region" description="Helical" evidence="10">
    <location>
        <begin position="786"/>
        <end position="806"/>
    </location>
</feature>
<feature type="topological domain" description="Extracellular" evidence="10">
    <location>
        <begin position="807"/>
        <end position="1214"/>
    </location>
</feature>
<feature type="transmembrane region" description="Helical" evidence="3">
    <location>
        <begin position="1215"/>
        <end position="1239"/>
    </location>
</feature>
<feature type="topological domain" description="Cytoplasmic" evidence="10">
    <location>
        <begin position="1240"/>
        <end position="1245"/>
    </location>
</feature>
<feature type="domain" description="Peptidase S3" evidence="11">
    <location>
        <begin position="114"/>
        <end position="264"/>
    </location>
</feature>
<feature type="region of interest" description="Disordered" evidence="12">
    <location>
        <begin position="1"/>
        <end position="106"/>
    </location>
</feature>
<feature type="region of interest" description="Host transcription inhibition" evidence="4">
    <location>
        <begin position="37"/>
        <end position="70"/>
    </location>
</feature>
<feature type="region of interest" description="Binding to the viral RNA" evidence="6">
    <location>
        <begin position="86"/>
        <end position="115"/>
    </location>
</feature>
<feature type="region of interest" description="Ribosome-binding" evidence="6">
    <location>
        <begin position="100"/>
        <end position="114"/>
    </location>
</feature>
<feature type="region of interest" description="Interaction with spike glycoprotein E2" evidence="3">
    <location>
        <begin position="157"/>
        <end position="162"/>
    </location>
</feature>
<feature type="region of interest" description="Dimerization of the capsid protein" evidence="5">
    <location>
        <begin position="185"/>
        <end position="195"/>
    </location>
</feature>
<feature type="region of interest" description="Dimerization of the capsid protein" evidence="5">
    <location>
        <begin position="221"/>
        <end position="225"/>
    </location>
</feature>
<feature type="region of interest" description="Interaction with spike glycoprotein E2" evidence="3">
    <location>
        <begin position="249"/>
        <end position="253"/>
    </location>
</feature>
<feature type="region of interest" description="Functions as an uncleaved signal peptide for the precursor of protein E3/E2" evidence="2">
    <location>
        <begin position="265"/>
        <end position="279"/>
    </location>
</feature>
<feature type="region of interest" description="Interaction with the capsid protein" evidence="3">
    <location>
        <begin position="719"/>
        <end position="723"/>
    </location>
</feature>
<feature type="region of interest" description="E1 fusion peptide loop" evidence="9">
    <location>
        <begin position="890"/>
        <end position="907"/>
    </location>
</feature>
<feature type="short sequence motif" description="Nuclear localization signal" evidence="4">
    <location>
        <begin position="63"/>
        <end position="100"/>
    </location>
</feature>
<feature type="short sequence motif" description="Nuclear export signal" evidence="4">
    <location>
        <begin position="146"/>
        <end position="156"/>
    </location>
</feature>
<feature type="compositionally biased region" description="Polar residues" evidence="12">
    <location>
        <begin position="38"/>
        <end position="49"/>
    </location>
</feature>
<feature type="compositionally biased region" description="Basic residues" evidence="12">
    <location>
        <begin position="67"/>
        <end position="106"/>
    </location>
</feature>
<feature type="active site" description="Charge relay system" evidence="11">
    <location>
        <position position="141"/>
    </location>
</feature>
<feature type="active site" description="Charge relay system" evidence="11">
    <location>
        <position position="163"/>
    </location>
</feature>
<feature type="active site" description="Charge relay system" evidence="11">
    <location>
        <position position="215"/>
    </location>
</feature>
<feature type="site" description="Involved in dimerization of the capsid protein" evidence="8">
    <location>
        <position position="189"/>
    </location>
</feature>
<feature type="site" description="Involved in dimerization of the capsid protein" evidence="8">
    <location>
        <position position="222"/>
    </location>
</feature>
<feature type="site" description="Cleavage; by autolysis" evidence="2">
    <location>
        <begin position="264"/>
        <end position="265"/>
    </location>
</feature>
<feature type="site" description="Cleavage; by host furin" evidence="2">
    <location>
        <begin position="328"/>
        <end position="329"/>
    </location>
</feature>
<feature type="site" description="Cleavage; by host signal peptidase" evidence="2">
    <location>
        <begin position="751"/>
        <end position="752"/>
    </location>
</feature>
<feature type="site" description="Cleavage; by host signal peptidase" evidence="2">
    <location>
        <begin position="806"/>
        <end position="807"/>
    </location>
</feature>
<feature type="lipid moiety-binding region" description="S-palmitoyl cysteine; by host" evidence="3">
    <location>
        <position position="724"/>
    </location>
</feature>
<feature type="lipid moiety-binding region" description="S-palmitoyl cysteine; by host" evidence="3">
    <location>
        <position position="744"/>
    </location>
</feature>
<feature type="lipid moiety-binding region" description="S-palmitoyl cysteine; by host" evidence="3">
    <location>
        <position position="745"/>
    </location>
</feature>
<feature type="glycosylation site" description="N-linked (GlcNAc...) asparagine; by host" evidence="10">
    <location>
        <position position="278"/>
    </location>
</feature>
<feature type="glycosylation site" description="N-linked (GlcNAc...) asparagine; by host" evidence="3">
    <location>
        <position position="524"/>
    </location>
</feature>
<feature type="glycosylation site" description="N-linked (GlcNAc...) asparagine; by host" evidence="3">
    <location>
        <position position="646"/>
    </location>
</feature>
<feature type="glycosylation site" description="N-linked (GlcNAc...) asparagine; by host" evidence="3">
    <location>
        <position position="945"/>
    </location>
</feature>
<feature type="glycosylation site" description="N-linked (GlcNAc...) asparagine; by host" evidence="3">
    <location>
        <position position="1051"/>
    </location>
</feature>
<feature type="disulfide bond" evidence="3">
    <location>
        <begin position="283"/>
        <end position="289"/>
    </location>
</feature>
<feature type="disulfide bond" evidence="7">
    <location>
        <begin position="480"/>
        <end position="594"/>
    </location>
</feature>
<feature type="disulfide bond" evidence="7">
    <location>
        <begin position="529"/>
        <end position="554"/>
    </location>
</feature>
<feature type="disulfide bond" evidence="7">
    <location>
        <begin position="531"/>
        <end position="548"/>
    </location>
</feature>
<feature type="disulfide bond" evidence="7">
    <location>
        <begin position="724"/>
        <end position="745"/>
    </location>
</feature>
<feature type="disulfide bond" evidence="3">
    <location>
        <begin position="855"/>
        <end position="920"/>
    </location>
</feature>
<feature type="disulfide bond" evidence="3">
    <location>
        <begin position="868"/>
        <end position="900"/>
    </location>
</feature>
<feature type="disulfide bond" evidence="3">
    <location>
        <begin position="869"/>
        <end position="902"/>
    </location>
</feature>
<feature type="disulfide bond" evidence="3">
    <location>
        <begin position="874"/>
        <end position="884"/>
    </location>
</feature>
<feature type="disulfide bond" evidence="3">
    <location>
        <begin position="1065"/>
        <end position="1077"/>
    </location>
</feature>
<feature type="disulfide bond" evidence="3">
    <location>
        <begin position="1107"/>
        <end position="1182"/>
    </location>
</feature>
<feature type="disulfide bond" evidence="3">
    <location>
        <begin position="1112"/>
        <end position="1186"/>
    </location>
</feature>
<feature type="disulfide bond" evidence="3">
    <location>
        <begin position="1134"/>
        <end position="1176"/>
    </location>
</feature>
<feature type="strand" evidence="13">
    <location>
        <begin position="115"/>
        <end position="119"/>
    </location>
</feature>
<feature type="strand" evidence="13">
    <location>
        <begin position="125"/>
        <end position="132"/>
    </location>
</feature>
<feature type="strand" evidence="13">
    <location>
        <begin position="135"/>
        <end position="139"/>
    </location>
</feature>
<feature type="strand" evidence="13">
    <location>
        <begin position="144"/>
        <end position="148"/>
    </location>
</feature>
<feature type="helix" evidence="13">
    <location>
        <begin position="151"/>
        <end position="153"/>
    </location>
</feature>
<feature type="strand" evidence="13">
    <location>
        <begin position="157"/>
        <end position="159"/>
    </location>
</feature>
<feature type="helix" evidence="13">
    <location>
        <begin position="160"/>
        <end position="162"/>
    </location>
</feature>
<feature type="strand" evidence="13">
    <location>
        <begin position="164"/>
        <end position="168"/>
    </location>
</feature>
<feature type="turn" evidence="13">
    <location>
        <begin position="171"/>
        <end position="176"/>
    </location>
</feature>
<feature type="strand" evidence="13">
    <location>
        <begin position="186"/>
        <end position="191"/>
    </location>
</feature>
<feature type="strand" evidence="13">
    <location>
        <begin position="194"/>
        <end position="199"/>
    </location>
</feature>
<feature type="strand" evidence="13">
    <location>
        <begin position="202"/>
        <end position="206"/>
    </location>
</feature>
<feature type="strand" evidence="13">
    <location>
        <begin position="218"/>
        <end position="220"/>
    </location>
</feature>
<feature type="strand" evidence="13">
    <location>
        <begin position="226"/>
        <end position="236"/>
    </location>
</feature>
<feature type="strand" evidence="13">
    <location>
        <begin position="239"/>
        <end position="247"/>
    </location>
</feature>
<feature type="strand" evidence="13">
    <location>
        <begin position="253"/>
        <end position="256"/>
    </location>
</feature>
<dbReference type="EC" id="3.4.21.90" evidence="2"/>
<dbReference type="EMBL" id="M69205">
    <property type="protein sequence ID" value="AAA96973.1"/>
    <property type="molecule type" value="Genomic_RNA"/>
</dbReference>
<dbReference type="EMBL" id="M69207">
    <property type="protein sequence ID" value="AAA73066.1"/>
    <property type="molecule type" value="Genomic_RNA"/>
</dbReference>
<dbReference type="PIR" id="B39991">
    <property type="entry name" value="VHWV82"/>
</dbReference>
<dbReference type="PDB" id="1WYK">
    <property type="method" value="X-ray"/>
    <property type="resolution" value="2.00 A"/>
    <property type="chains" value="A/B/C/D=114-264"/>
</dbReference>
<dbReference type="PDBsum" id="1WYK"/>
<dbReference type="SMR" id="P27285"/>
<dbReference type="MEROPS" id="S03.001"/>
<dbReference type="EvolutionaryTrace" id="P27285"/>
<dbReference type="Proteomes" id="UP000006561">
    <property type="component" value="Genome"/>
</dbReference>
<dbReference type="GO" id="GO:0030430">
    <property type="term" value="C:host cell cytoplasm"/>
    <property type="evidence" value="ECO:0007669"/>
    <property type="project" value="UniProtKB-SubCell"/>
</dbReference>
<dbReference type="GO" id="GO:0042025">
    <property type="term" value="C:host cell nucleus"/>
    <property type="evidence" value="ECO:0007669"/>
    <property type="project" value="UniProtKB-SubCell"/>
</dbReference>
<dbReference type="GO" id="GO:0020002">
    <property type="term" value="C:host cell plasma membrane"/>
    <property type="evidence" value="ECO:0007669"/>
    <property type="project" value="UniProtKB-SubCell"/>
</dbReference>
<dbReference type="GO" id="GO:0016020">
    <property type="term" value="C:membrane"/>
    <property type="evidence" value="ECO:0007669"/>
    <property type="project" value="UniProtKB-KW"/>
</dbReference>
<dbReference type="GO" id="GO:0039619">
    <property type="term" value="C:T=4 icosahedral viral capsid"/>
    <property type="evidence" value="ECO:0007669"/>
    <property type="project" value="UniProtKB-KW"/>
</dbReference>
<dbReference type="GO" id="GO:0055036">
    <property type="term" value="C:virion membrane"/>
    <property type="evidence" value="ECO:0007669"/>
    <property type="project" value="UniProtKB-SubCell"/>
</dbReference>
<dbReference type="GO" id="GO:0003723">
    <property type="term" value="F:RNA binding"/>
    <property type="evidence" value="ECO:0007669"/>
    <property type="project" value="UniProtKB-KW"/>
</dbReference>
<dbReference type="GO" id="GO:0004252">
    <property type="term" value="F:serine-type endopeptidase activity"/>
    <property type="evidence" value="ECO:0007669"/>
    <property type="project" value="InterPro"/>
</dbReference>
<dbReference type="GO" id="GO:0005198">
    <property type="term" value="F:structural molecule activity"/>
    <property type="evidence" value="ECO:0007669"/>
    <property type="project" value="InterPro"/>
</dbReference>
<dbReference type="GO" id="GO:0039654">
    <property type="term" value="P:fusion of virus membrane with host endosome membrane"/>
    <property type="evidence" value="ECO:0007669"/>
    <property type="project" value="UniProtKB-KW"/>
</dbReference>
<dbReference type="GO" id="GO:0006508">
    <property type="term" value="P:proteolysis"/>
    <property type="evidence" value="ECO:0007669"/>
    <property type="project" value="UniProtKB-KW"/>
</dbReference>
<dbReference type="GO" id="GO:0046718">
    <property type="term" value="P:symbiont entry into host cell"/>
    <property type="evidence" value="ECO:0007669"/>
    <property type="project" value="UniProtKB-KW"/>
</dbReference>
<dbReference type="GO" id="GO:0039722">
    <property type="term" value="P:symbiont-mediated suppression of host toll-like receptor signaling pathway"/>
    <property type="evidence" value="ECO:0000250"/>
    <property type="project" value="UniProtKB"/>
</dbReference>
<dbReference type="GO" id="GO:0019062">
    <property type="term" value="P:virion attachment to host cell"/>
    <property type="evidence" value="ECO:0007669"/>
    <property type="project" value="UniProtKB-KW"/>
</dbReference>
<dbReference type="FunFam" id="2.40.10.10:FF:000075">
    <property type="entry name" value="Structural polyprotein"/>
    <property type="match status" value="1"/>
</dbReference>
<dbReference type="Gene3D" id="1.10.287.2230">
    <property type="match status" value="1"/>
</dbReference>
<dbReference type="Gene3D" id="2.60.40.350">
    <property type="match status" value="1"/>
</dbReference>
<dbReference type="Gene3D" id="2.60.40.3200">
    <property type="entry name" value="Alphavirus E2 glycoprotein, A domain"/>
    <property type="match status" value="1"/>
</dbReference>
<dbReference type="Gene3D" id="2.60.40.4310">
    <property type="entry name" value="Alphavirus E2 glycoprotein, domain B"/>
    <property type="match status" value="1"/>
</dbReference>
<dbReference type="Gene3D" id="2.60.40.2400">
    <property type="entry name" value="Alphavirus E2 glycoprotein, domain C"/>
    <property type="match status" value="1"/>
</dbReference>
<dbReference type="Gene3D" id="2.60.98.10">
    <property type="entry name" value="Tick-borne Encephalitis virus Glycoprotein, domain 1"/>
    <property type="match status" value="3"/>
</dbReference>
<dbReference type="Gene3D" id="2.40.10.10">
    <property type="entry name" value="Trypsin-like serine proteases"/>
    <property type="match status" value="2"/>
</dbReference>
<dbReference type="InterPro" id="IPR002548">
    <property type="entry name" value="Alpha_E1_glycop"/>
</dbReference>
<dbReference type="InterPro" id="IPR000936">
    <property type="entry name" value="Alpha_E2_glycop"/>
</dbReference>
<dbReference type="InterPro" id="IPR002533">
    <property type="entry name" value="Alpha_E3_glycop"/>
</dbReference>
<dbReference type="InterPro" id="IPR042304">
    <property type="entry name" value="Alphavir_E2_A"/>
</dbReference>
<dbReference type="InterPro" id="IPR042305">
    <property type="entry name" value="Alphavir_E2_B"/>
</dbReference>
<dbReference type="InterPro" id="IPR042306">
    <property type="entry name" value="Alphavir_E2_C"/>
</dbReference>
<dbReference type="InterPro" id="IPR000336">
    <property type="entry name" value="Flavivir/Alphavir_Ig-like_sf"/>
</dbReference>
<dbReference type="InterPro" id="IPR036253">
    <property type="entry name" value="Glycoprot_cen/dimer_sf"/>
</dbReference>
<dbReference type="InterPro" id="IPR038055">
    <property type="entry name" value="Glycoprot_E_dimer_dom"/>
</dbReference>
<dbReference type="InterPro" id="IPR014756">
    <property type="entry name" value="Ig_E-set"/>
</dbReference>
<dbReference type="InterPro" id="IPR009003">
    <property type="entry name" value="Peptidase_S1_PA"/>
</dbReference>
<dbReference type="InterPro" id="IPR043504">
    <property type="entry name" value="Peptidase_S1_PA_chymotrypsin"/>
</dbReference>
<dbReference type="InterPro" id="IPR000930">
    <property type="entry name" value="Peptidase_S3"/>
</dbReference>
<dbReference type="Pfam" id="PF01589">
    <property type="entry name" value="Alpha_E1_glycop"/>
    <property type="match status" value="1"/>
</dbReference>
<dbReference type="Pfam" id="PF00943">
    <property type="entry name" value="Alpha_E2_glycop"/>
    <property type="match status" value="1"/>
</dbReference>
<dbReference type="Pfam" id="PF01563">
    <property type="entry name" value="Alpha_E3_glycop"/>
    <property type="match status" value="1"/>
</dbReference>
<dbReference type="Pfam" id="PF00944">
    <property type="entry name" value="Peptidase_S3"/>
    <property type="match status" value="1"/>
</dbReference>
<dbReference type="PRINTS" id="PR00798">
    <property type="entry name" value="TOGAVIRIN"/>
</dbReference>
<dbReference type="SUPFAM" id="SSF81296">
    <property type="entry name" value="E set domains"/>
    <property type="match status" value="1"/>
</dbReference>
<dbReference type="SUPFAM" id="SSF50494">
    <property type="entry name" value="Trypsin-like serine proteases"/>
    <property type="match status" value="1"/>
</dbReference>
<dbReference type="SUPFAM" id="SSF56983">
    <property type="entry name" value="Viral glycoprotein, central and dimerisation domains"/>
    <property type="match status" value="1"/>
</dbReference>
<dbReference type="PROSITE" id="PS51690">
    <property type="entry name" value="ALPHAVIRUS_CP"/>
    <property type="match status" value="1"/>
</dbReference>
<name>POLS_SINDO</name>
<proteinExistence type="evidence at protein level"/>
<keyword id="KW-0002">3D-structure</keyword>
<keyword id="KW-0167">Capsid protein</keyword>
<keyword id="KW-0165">Cleavage on pair of basic residues</keyword>
<keyword id="KW-1015">Disulfide bond</keyword>
<keyword id="KW-1170">Fusion of virus membrane with host endosomal membrane</keyword>
<keyword id="KW-1168">Fusion of virus membrane with host membrane</keyword>
<keyword id="KW-0325">Glycoprotein</keyword>
<keyword id="KW-1032">Host cell membrane</keyword>
<keyword id="KW-1035">Host cytoplasm</keyword>
<keyword id="KW-1038">Host endoplasmic reticulum</keyword>
<keyword id="KW-1040">Host Golgi apparatus</keyword>
<keyword id="KW-1043">Host membrane</keyword>
<keyword id="KW-1048">Host nucleus</keyword>
<keyword id="KW-0945">Host-virus interaction</keyword>
<keyword id="KW-0378">Hydrolase</keyword>
<keyword id="KW-0407">Ion channel</keyword>
<keyword id="KW-0406">Ion transport</keyword>
<keyword id="KW-0449">Lipoprotein</keyword>
<keyword id="KW-0472">Membrane</keyword>
<keyword id="KW-0564">Palmitate</keyword>
<keyword id="KW-0645">Protease</keyword>
<keyword id="KW-0694">RNA-binding</keyword>
<keyword id="KW-0720">Serine protease</keyword>
<keyword id="KW-1144">T=4 icosahedral capsid protein</keyword>
<keyword id="KW-0812">Transmembrane</keyword>
<keyword id="KW-1133">Transmembrane helix</keyword>
<keyword id="KW-0813">Transport</keyword>
<keyword id="KW-1161">Viral attachment to host cell</keyword>
<keyword id="KW-1234">Viral attachment to host entry receptor</keyword>
<keyword id="KW-1182">Viral ion channel</keyword>
<keyword id="KW-1162">Viral penetration into host cytoplasm</keyword>
<keyword id="KW-0946">Virion</keyword>
<keyword id="KW-1160">Virus entry into host cell</keyword>